<gene>
    <name type="primary">Katna1</name>
</gene>
<keyword id="KW-0067">ATP-binding</keyword>
<keyword id="KW-0131">Cell cycle</keyword>
<keyword id="KW-0132">Cell division</keyword>
<keyword id="KW-0963">Cytoplasm</keyword>
<keyword id="KW-0206">Cytoskeleton</keyword>
<keyword id="KW-0413">Isomerase</keyword>
<keyword id="KW-0493">Microtubule</keyword>
<keyword id="KW-0498">Mitosis</keyword>
<keyword id="KW-0547">Nucleotide-binding</keyword>
<keyword id="KW-0597">Phosphoprotein</keyword>
<keyword id="KW-1185">Reference proteome</keyword>
<keyword id="KW-0832">Ubl conjugation</keyword>
<accession>Q6E0V2</accession>
<accession>Q4V7G3</accession>
<proteinExistence type="evidence at protein level"/>
<reference key="1">
    <citation type="journal article" date="2004" name="J. Neurosci.">
        <title>Axonal growth is sensitive to the levels of katanin, a protein that severs microtubules.</title>
        <authorList>
            <person name="Karabay A."/>
            <person name="Yu W."/>
            <person name="Solowska J.M."/>
            <person name="Baird D.H."/>
            <person name="Baas P.W."/>
        </authorList>
    </citation>
    <scope>NUCLEOTIDE SEQUENCE [MRNA]</scope>
    <scope>FUNCTION</scope>
    <scope>SUBCELLULAR LOCATION</scope>
    <scope>MUTAGENESIS OF LYS-255</scope>
    <source>
        <strain>Sprague-Dawley</strain>
        <tissue>Brain</tissue>
    </source>
</reference>
<reference key="2">
    <citation type="journal article" date="2004" name="Genome Res.">
        <title>The status, quality, and expansion of the NIH full-length cDNA project: the Mammalian Gene Collection (MGC).</title>
        <authorList>
            <consortium name="The MGC Project Team"/>
        </authorList>
    </citation>
    <scope>NUCLEOTIDE SEQUENCE [LARGE SCALE MRNA]</scope>
    <source>
        <tissue>Placenta</tissue>
    </source>
</reference>
<reference key="3">
    <citation type="journal article" date="1999" name="J. Cell Biol.">
        <title>An essential role for katanin in severing microtubules in the neuron.</title>
        <authorList>
            <person name="Ahmad F.J."/>
            <person name="Yu W."/>
            <person name="McNally F.J."/>
            <person name="Baas P.W."/>
        </authorList>
    </citation>
    <scope>FUNCTION</scope>
    <scope>SUBCELLULAR LOCATION</scope>
</reference>
<dbReference type="EC" id="5.6.1.1" evidence="4"/>
<dbReference type="EMBL" id="AY621629">
    <property type="protein sequence ID" value="AAT44333.1"/>
    <property type="molecule type" value="mRNA"/>
</dbReference>
<dbReference type="EMBL" id="BC097929">
    <property type="protein sequence ID" value="AAH97929.1"/>
    <property type="molecule type" value="mRNA"/>
</dbReference>
<dbReference type="RefSeq" id="NP_001004217.2">
    <property type="nucleotide sequence ID" value="NM_001004217.4"/>
</dbReference>
<dbReference type="SMR" id="Q6E0V2"/>
<dbReference type="BioGRID" id="253846">
    <property type="interactions" value="16"/>
</dbReference>
<dbReference type="FunCoup" id="Q6E0V2">
    <property type="interactions" value="2322"/>
</dbReference>
<dbReference type="STRING" id="10116.ENSRNOP00000020417"/>
<dbReference type="iPTMnet" id="Q6E0V2"/>
<dbReference type="PhosphoSitePlus" id="Q6E0V2"/>
<dbReference type="jPOST" id="Q6E0V2"/>
<dbReference type="PaxDb" id="10116-ENSRNOP00000020417"/>
<dbReference type="GeneID" id="292464"/>
<dbReference type="KEGG" id="rno:292464"/>
<dbReference type="UCSC" id="RGD:1303062">
    <property type="organism name" value="rat"/>
</dbReference>
<dbReference type="AGR" id="RGD:1303062"/>
<dbReference type="CTD" id="11104"/>
<dbReference type="RGD" id="1303062">
    <property type="gene designation" value="Katna1"/>
</dbReference>
<dbReference type="eggNOG" id="KOG0738">
    <property type="taxonomic scope" value="Eukaryota"/>
</dbReference>
<dbReference type="InParanoid" id="Q6E0V2"/>
<dbReference type="OrthoDB" id="32028at9989"/>
<dbReference type="PhylomeDB" id="Q6E0V2"/>
<dbReference type="TreeFam" id="TF323170"/>
<dbReference type="BRENDA" id="5.6.1.1">
    <property type="organism ID" value="5301"/>
</dbReference>
<dbReference type="PRO" id="PR:Q6E0V2"/>
<dbReference type="Proteomes" id="UP000002494">
    <property type="component" value="Unplaced"/>
</dbReference>
<dbReference type="GO" id="GO:0030424">
    <property type="term" value="C:axon"/>
    <property type="evidence" value="ECO:0000314"/>
    <property type="project" value="RGD"/>
</dbReference>
<dbReference type="GO" id="GO:0005813">
    <property type="term" value="C:centrosome"/>
    <property type="evidence" value="ECO:0000266"/>
    <property type="project" value="RGD"/>
</dbReference>
<dbReference type="GO" id="GO:0031463">
    <property type="term" value="C:Cul3-RING ubiquitin ligase complex"/>
    <property type="evidence" value="ECO:0000250"/>
    <property type="project" value="UniProtKB"/>
</dbReference>
<dbReference type="GO" id="GO:0005737">
    <property type="term" value="C:cytoplasm"/>
    <property type="evidence" value="ECO:0000250"/>
    <property type="project" value="UniProtKB"/>
</dbReference>
<dbReference type="GO" id="GO:0030426">
    <property type="term" value="C:growth cone"/>
    <property type="evidence" value="ECO:0000314"/>
    <property type="project" value="RGD"/>
</dbReference>
<dbReference type="GO" id="GO:0008352">
    <property type="term" value="C:katanin complex"/>
    <property type="evidence" value="ECO:0000266"/>
    <property type="project" value="RGD"/>
</dbReference>
<dbReference type="GO" id="GO:0005811">
    <property type="term" value="C:lipid droplet"/>
    <property type="evidence" value="ECO:0000266"/>
    <property type="project" value="RGD"/>
</dbReference>
<dbReference type="GO" id="GO:0005874">
    <property type="term" value="C:microtubule"/>
    <property type="evidence" value="ECO:0007669"/>
    <property type="project" value="UniProtKB-KW"/>
</dbReference>
<dbReference type="GO" id="GO:0015630">
    <property type="term" value="C:microtubule cytoskeleton"/>
    <property type="evidence" value="ECO:0000318"/>
    <property type="project" value="GO_Central"/>
</dbReference>
<dbReference type="GO" id="GO:0030496">
    <property type="term" value="C:midbody"/>
    <property type="evidence" value="ECO:0000250"/>
    <property type="project" value="UniProtKB"/>
</dbReference>
<dbReference type="GO" id="GO:0097431">
    <property type="term" value="C:mitotic spindle pole"/>
    <property type="evidence" value="ECO:0000250"/>
    <property type="project" value="UniProtKB"/>
</dbReference>
<dbReference type="GO" id="GO:0043025">
    <property type="term" value="C:neuronal cell body"/>
    <property type="evidence" value="ECO:0000314"/>
    <property type="project" value="RGD"/>
</dbReference>
<dbReference type="GO" id="GO:0005634">
    <property type="term" value="C:nucleus"/>
    <property type="evidence" value="ECO:0000266"/>
    <property type="project" value="RGD"/>
</dbReference>
<dbReference type="GO" id="GO:0005886">
    <property type="term" value="C:plasma membrane"/>
    <property type="evidence" value="ECO:0000266"/>
    <property type="project" value="RGD"/>
</dbReference>
<dbReference type="GO" id="GO:0005819">
    <property type="term" value="C:spindle"/>
    <property type="evidence" value="ECO:0000250"/>
    <property type="project" value="UniProtKB"/>
</dbReference>
<dbReference type="GO" id="GO:0000922">
    <property type="term" value="C:spindle pole"/>
    <property type="evidence" value="ECO:0000250"/>
    <property type="project" value="UniProtKB"/>
</dbReference>
<dbReference type="GO" id="GO:0005524">
    <property type="term" value="F:ATP binding"/>
    <property type="evidence" value="ECO:0000304"/>
    <property type="project" value="RGD"/>
</dbReference>
<dbReference type="GO" id="GO:0016887">
    <property type="term" value="F:ATP hydrolysis activity"/>
    <property type="evidence" value="ECO:0000266"/>
    <property type="project" value="RGD"/>
</dbReference>
<dbReference type="GO" id="GO:0070840">
    <property type="term" value="F:dynein complex binding"/>
    <property type="evidence" value="ECO:0000266"/>
    <property type="project" value="RGD"/>
</dbReference>
<dbReference type="GO" id="GO:0008017">
    <property type="term" value="F:microtubule binding"/>
    <property type="evidence" value="ECO:0000266"/>
    <property type="project" value="RGD"/>
</dbReference>
<dbReference type="GO" id="GO:0008568">
    <property type="term" value="F:microtubule severing ATPase activity"/>
    <property type="evidence" value="ECO:0000266"/>
    <property type="project" value="RGD"/>
</dbReference>
<dbReference type="GO" id="GO:0046982">
    <property type="term" value="F:protein heterodimerization activity"/>
    <property type="evidence" value="ECO:0000266"/>
    <property type="project" value="RGD"/>
</dbReference>
<dbReference type="GO" id="GO:0051301">
    <property type="term" value="P:cell division"/>
    <property type="evidence" value="ECO:0007669"/>
    <property type="project" value="UniProtKB-KW"/>
</dbReference>
<dbReference type="GO" id="GO:0031122">
    <property type="term" value="P:cytoplasmic microtubule organization"/>
    <property type="evidence" value="ECO:0000266"/>
    <property type="project" value="RGD"/>
</dbReference>
<dbReference type="GO" id="GO:0001578">
    <property type="term" value="P:microtubule bundle formation"/>
    <property type="evidence" value="ECO:0000266"/>
    <property type="project" value="RGD"/>
</dbReference>
<dbReference type="GO" id="GO:0051013">
    <property type="term" value="P:microtubule severing"/>
    <property type="evidence" value="ECO:0000314"/>
    <property type="project" value="RGD"/>
</dbReference>
<dbReference type="GO" id="GO:0010977">
    <property type="term" value="P:negative regulation of neuron projection development"/>
    <property type="evidence" value="ECO:0000314"/>
    <property type="project" value="RGD"/>
</dbReference>
<dbReference type="GO" id="GO:0001764">
    <property type="term" value="P:neuron migration"/>
    <property type="evidence" value="ECO:0000266"/>
    <property type="project" value="RGD"/>
</dbReference>
<dbReference type="GO" id="GO:0008104">
    <property type="term" value="P:protein localization"/>
    <property type="evidence" value="ECO:0000266"/>
    <property type="project" value="RGD"/>
</dbReference>
<dbReference type="CDD" id="cd21748">
    <property type="entry name" value="Kp60-NTD"/>
    <property type="match status" value="1"/>
</dbReference>
<dbReference type="CDD" id="cd19522">
    <property type="entry name" value="RecA-like_KTNA1"/>
    <property type="match status" value="1"/>
</dbReference>
<dbReference type="FunFam" id="1.10.8.60:FF:000025">
    <property type="entry name" value="Katanin p60 ATPase-containing subunit A1"/>
    <property type="match status" value="1"/>
</dbReference>
<dbReference type="FunFam" id="1.20.58.80:FF:000003">
    <property type="entry name" value="Katanin p60 ATPase-containing subunit A1"/>
    <property type="match status" value="1"/>
</dbReference>
<dbReference type="FunFam" id="3.40.50.300:FF:000159">
    <property type="entry name" value="Katanin p60 ATPase-containing subunit A1"/>
    <property type="match status" value="1"/>
</dbReference>
<dbReference type="Gene3D" id="1.10.8.60">
    <property type="match status" value="1"/>
</dbReference>
<dbReference type="Gene3D" id="3.40.50.300">
    <property type="entry name" value="P-loop containing nucleotide triphosphate hydrolases"/>
    <property type="match status" value="1"/>
</dbReference>
<dbReference type="Gene3D" id="1.20.58.80">
    <property type="entry name" value="Phosphotransferase system, lactose/cellobiose-type IIA subunit"/>
    <property type="match status" value="1"/>
</dbReference>
<dbReference type="HAMAP" id="MF_03023">
    <property type="entry name" value="Katanin_p60_A1"/>
    <property type="match status" value="1"/>
</dbReference>
<dbReference type="InterPro" id="IPR003593">
    <property type="entry name" value="AAA+_ATPase"/>
</dbReference>
<dbReference type="InterPro" id="IPR041569">
    <property type="entry name" value="AAA_lid_3"/>
</dbReference>
<dbReference type="InterPro" id="IPR003959">
    <property type="entry name" value="ATPase_AAA_core"/>
</dbReference>
<dbReference type="InterPro" id="IPR003960">
    <property type="entry name" value="ATPase_AAA_CS"/>
</dbReference>
<dbReference type="InterPro" id="IPR028596">
    <property type="entry name" value="KATNA1"/>
</dbReference>
<dbReference type="InterPro" id="IPR048611">
    <property type="entry name" value="KATNA1_MIT"/>
</dbReference>
<dbReference type="InterPro" id="IPR048612">
    <property type="entry name" value="KTNA1_AAA_dom"/>
</dbReference>
<dbReference type="InterPro" id="IPR050304">
    <property type="entry name" value="MT-severing_AAA_ATPase"/>
</dbReference>
<dbReference type="InterPro" id="IPR027417">
    <property type="entry name" value="P-loop_NTPase"/>
</dbReference>
<dbReference type="InterPro" id="IPR015415">
    <property type="entry name" value="Spast_Vps4_C"/>
</dbReference>
<dbReference type="PANTHER" id="PTHR23074">
    <property type="entry name" value="AAA DOMAIN-CONTAINING"/>
    <property type="match status" value="1"/>
</dbReference>
<dbReference type="PANTHER" id="PTHR23074:SF71">
    <property type="entry name" value="KATANIN P60 ATPASE-CONTAINING SUBUNIT A1"/>
    <property type="match status" value="1"/>
</dbReference>
<dbReference type="Pfam" id="PF00004">
    <property type="entry name" value="AAA"/>
    <property type="match status" value="1"/>
</dbReference>
<dbReference type="Pfam" id="PF17862">
    <property type="entry name" value="AAA_lid_3"/>
    <property type="match status" value="1"/>
</dbReference>
<dbReference type="Pfam" id="PF21126">
    <property type="entry name" value="KATNA1_MIT"/>
    <property type="match status" value="1"/>
</dbReference>
<dbReference type="Pfam" id="PF09336">
    <property type="entry name" value="Vps4_C"/>
    <property type="match status" value="1"/>
</dbReference>
<dbReference type="SMART" id="SM00382">
    <property type="entry name" value="AAA"/>
    <property type="match status" value="1"/>
</dbReference>
<dbReference type="SUPFAM" id="SSF52540">
    <property type="entry name" value="P-loop containing nucleoside triphosphate hydrolases"/>
    <property type="match status" value="1"/>
</dbReference>
<dbReference type="PROSITE" id="PS00674">
    <property type="entry name" value="AAA"/>
    <property type="match status" value="1"/>
</dbReference>
<evidence type="ECO:0000250" key="1"/>
<evidence type="ECO:0000250" key="2">
    <source>
        <dbReference type="UniProtKB" id="O75449"/>
    </source>
</evidence>
<evidence type="ECO:0000250" key="3">
    <source>
        <dbReference type="UniProtKB" id="Q9WV86"/>
    </source>
</evidence>
<evidence type="ECO:0000255" key="4">
    <source>
        <dbReference type="HAMAP-Rule" id="MF_03023"/>
    </source>
</evidence>
<evidence type="ECO:0000256" key="5">
    <source>
        <dbReference type="SAM" id="MobiDB-lite"/>
    </source>
</evidence>
<evidence type="ECO:0000269" key="6">
    <source>
    </source>
</evidence>
<evidence type="ECO:0000269" key="7">
    <source>
    </source>
</evidence>
<name>KTNA1_RAT</name>
<comment type="function">
    <text evidence="4 6 7">Catalytic subunit of a complex which severs microtubules in an ATP-dependent manner. Microtubule severing may promote rapid reorganization of cellular microtubule arrays and the release of microtubules from the centrosome following nucleation. Microtubule release from the mitotic spindle poles may allow depolymerization of the microtubule end proximal to the spindle pole, leading to poleward microtubule flux and poleward motion of chromosome. Microtubule release within the cell body of neurons may be required for their transport into neuronal processes by microtubule-dependent motor proteins. This transport is required for axonal growth.</text>
</comment>
<comment type="catalytic activity">
    <reaction evidence="4">
        <text>n ATP + n H2O + a microtubule = n ADP + n phosphate + (n+1) alpha/beta tubulin heterodimers.</text>
        <dbReference type="EC" id="5.6.1.1"/>
    </reaction>
</comment>
<comment type="activity regulation">
    <text evidence="4">ATPase activity is stimulated by microtubules, which promote homooligomerization. ATP-dependent microtubule severing is stimulated by interaction with KATNB1.</text>
</comment>
<comment type="subunit">
    <text evidence="2 3 4">Can homooligomerize into hexameric rings, which may be promoted by interaction with microtubules. Interacts with KATNB1, which may serve as a targeting subunit (By similarity). Interacts with ASPM; the katanin complex formation KATNA1:KATNB1 is required for the association of ASPM (By similarity). Interacts with dynein and NDEL1. Associates with the E3 ligase complex containing DYRK2, EDD/UBR5, DDB1 and DCAF1 proteins (EDVP complex). Interacts with KLHL42 (via the kelch domains). Interacts with CUL3; the interaction is enhanced by KLHL42 (By similarity). Interacts with KATNB1 and KATNBL1 (By similarity).</text>
</comment>
<comment type="subcellular location">
    <subcellularLocation>
        <location>Cytoplasm</location>
    </subcellularLocation>
    <subcellularLocation>
        <location evidence="4">Midbody</location>
    </subcellularLocation>
    <subcellularLocation>
        <location>Cytoplasm</location>
        <location>Cytoskeleton</location>
        <location>Microtubule organizing center</location>
        <location>Centrosome</location>
    </subcellularLocation>
    <subcellularLocation>
        <location evidence="4">Cytoplasm</location>
        <location evidence="4">Cytoskeleton</location>
        <location evidence="4">Spindle pole</location>
    </subcellularLocation>
    <subcellularLocation>
        <location evidence="2">Cytoplasm</location>
        <location evidence="2">Cytoskeleton</location>
        <location evidence="2">Spindle</location>
    </subcellularLocation>
    <text evidence="2 4">Predominantly cytoplasmic. Localized diffusely in the cytoplasm during the interphase. During metaphase is localized throughout the cell and more widely dispersed than the microtubules. In anaphase and telophase is localized at the midbody region. Also localized to the interphase centrosome and the mitotic spindle poles. Enhanced recruitment to the mitotic spindle poles requires microtubules and interaction with KATNB1 (By similarity). Localizes within the cytoplasm, partially overlapping with microtubules, in interphase and to the mitotic spindle and spindle poles during mitosis (By similarity). Interacts with CAMSAP2 and CAMSAP3; leading to regulate the length of CAMSAP-decorated microtubule stretches (By similarity).</text>
</comment>
<comment type="domain">
    <text evidence="4">The N-terminus is sufficient for interaction with microtubules, although high affinity binding to microtubules also requires an intact C-terminal domain and ATP, which promotes oligomerization.</text>
</comment>
<comment type="PTM">
    <text evidence="4">Phosphorylation by DYRK2 triggers ubiquitination and subsequent degradation.</text>
</comment>
<comment type="PTM">
    <text evidence="4">Ubiquitinated by the BCR(KLHL42) E3 ubiquitin ligase complex, leading to its proteasomal degradation. Ubiquitinated by the EDVP E3 ligase complex and subsequently targeted for proteasomal degradation.</text>
</comment>
<comment type="similarity">
    <text evidence="4">Belongs to the AAA ATPase family. Katanin p60 subunit A1 subfamily.</text>
</comment>
<organism>
    <name type="scientific">Rattus norvegicus</name>
    <name type="common">Rat</name>
    <dbReference type="NCBI Taxonomy" id="10116"/>
    <lineage>
        <taxon>Eukaryota</taxon>
        <taxon>Metazoa</taxon>
        <taxon>Chordata</taxon>
        <taxon>Craniata</taxon>
        <taxon>Vertebrata</taxon>
        <taxon>Euteleostomi</taxon>
        <taxon>Mammalia</taxon>
        <taxon>Eutheria</taxon>
        <taxon>Euarchontoglires</taxon>
        <taxon>Glires</taxon>
        <taxon>Rodentia</taxon>
        <taxon>Myomorpha</taxon>
        <taxon>Muroidea</taxon>
        <taxon>Muridae</taxon>
        <taxon>Murinae</taxon>
        <taxon>Rattus</taxon>
    </lineage>
</organism>
<sequence>MSLLMITENVKLAREYALLGNYDSAMVYYQGVLDQINKYLYSVKDTHLHQKWQQVWQEINVEAKHVKEIMKTLESFKLDSTSLKAAQHELPSSEGEVWSLPVPVERRPLPGPRKRQSTQHSDPKPHSNRPGAVVRAHRPSAQSLHSDRGKAVRSREKKEQSKGREEKNKLPAAVTEPEANKFDSTGYDKDLVEALERDIISQNPNVRWYDIADLVEAKKLLQEAVVLPMWMPEFFKGIRRPWKGVLMVGPPGTGKTLLAKAVATECKTTFFNVSSSTLTSKYRGESEKLVRLLFEMARFYSPATIFIDEIDSICSRRGTSEEHEASRRVKAELLVQMDGVGGASENDDPSKMVMVLAATNFPWDIDEALRRRLEKRIYIPLPSAKGREELLRISLRELELADDVNLASIAENMEGYSGADITNVCRDASLMAMRRRIEGLTPEEIRNLSREEMHMPTTMEDFEMALKKVSKSVSAADIERYEKWIVEFGSC</sequence>
<protein>
    <recommendedName>
        <fullName evidence="4">Katanin p60 ATPase-containing subunit A1</fullName>
        <shortName evidence="4">Katanin p60 subunit A1</shortName>
        <ecNumber evidence="4">5.6.1.1</ecNumber>
    </recommendedName>
    <alternativeName>
        <fullName evidence="4">p60 katanin</fullName>
    </alternativeName>
</protein>
<feature type="chain" id="PRO_0000084596" description="Katanin p60 ATPase-containing subunit A1">
    <location>
        <begin position="1"/>
        <end position="491"/>
    </location>
</feature>
<feature type="region of interest" description="Interaction with microtubules" evidence="1">
    <location>
        <begin position="1"/>
        <end position="185"/>
    </location>
</feature>
<feature type="region of interest" description="Interaction with dynein and NDEL1" evidence="1">
    <location>
        <begin position="1"/>
        <end position="75"/>
    </location>
</feature>
<feature type="region of interest" description="Interaction with KATNB1" evidence="1">
    <location>
        <begin position="1"/>
        <end position="29"/>
    </location>
</feature>
<feature type="region of interest" description="Disordered" evidence="5">
    <location>
        <begin position="87"/>
        <end position="183"/>
    </location>
</feature>
<feature type="compositionally biased region" description="Basic and acidic residues" evidence="5">
    <location>
        <begin position="145"/>
        <end position="169"/>
    </location>
</feature>
<feature type="binding site" evidence="4">
    <location>
        <begin position="249"/>
        <end position="256"/>
    </location>
    <ligand>
        <name>ATP</name>
        <dbReference type="ChEBI" id="CHEBI:30616"/>
    </ligand>
</feature>
<feature type="modified residue" description="Phosphoserine; by DYRK2" evidence="2 4">
    <location>
        <position position="42"/>
    </location>
</feature>
<feature type="mutagenesis site" description="Abolishes ATPase activity." evidence="7">
    <original>K</original>
    <variation>A</variation>
    <location>
        <position position="255"/>
    </location>
</feature>